<organism>
    <name type="scientific">Acipenser gueldenstaedtii</name>
    <name type="common">Russian sturgeon</name>
    <name type="synonym">Danube sturgeon</name>
    <dbReference type="NCBI Taxonomy" id="7902"/>
    <lineage>
        <taxon>Eukaryota</taxon>
        <taxon>Metazoa</taxon>
        <taxon>Chordata</taxon>
        <taxon>Craniata</taxon>
        <taxon>Vertebrata</taxon>
        <taxon>Euteleostomi</taxon>
        <taxon>Actinopterygii</taxon>
        <taxon>Chondrostei</taxon>
        <taxon>Acipenseriformes</taxon>
        <taxon>Acipenseridae</taxon>
        <taxon>Acipenser</taxon>
    </lineage>
</organism>
<comment type="function">
    <text>Insulin decreases blood glucose concentration. It increases cell permeability to monosaccharides, amino acids and fatty acids. It accelerates glycolysis, the pentose phosphate cycle, and glycogen synthesis in liver.</text>
</comment>
<comment type="subunit">
    <text>Heterodimer of a B chain and an A chain linked by two disulfide bonds.</text>
</comment>
<comment type="subcellular location">
    <subcellularLocation>
        <location>Secreted</location>
    </subcellularLocation>
</comment>
<comment type="similarity">
    <text evidence="1">Belongs to the insulin family.</text>
</comment>
<evidence type="ECO:0000305" key="1"/>
<proteinExistence type="evidence at protein level"/>
<dbReference type="SMR" id="P81423"/>
<dbReference type="GO" id="GO:0005615">
    <property type="term" value="C:extracellular space"/>
    <property type="evidence" value="ECO:0007669"/>
    <property type="project" value="TreeGrafter"/>
</dbReference>
<dbReference type="GO" id="GO:0005179">
    <property type="term" value="F:hormone activity"/>
    <property type="evidence" value="ECO:0007669"/>
    <property type="project" value="UniProtKB-KW"/>
</dbReference>
<dbReference type="GO" id="GO:0006006">
    <property type="term" value="P:glucose metabolic process"/>
    <property type="evidence" value="ECO:0007669"/>
    <property type="project" value="UniProtKB-KW"/>
</dbReference>
<dbReference type="CDD" id="cd04367">
    <property type="entry name" value="IlGF_insulin_like"/>
    <property type="match status" value="1"/>
</dbReference>
<dbReference type="Gene3D" id="1.10.100.10">
    <property type="entry name" value="Insulin-like"/>
    <property type="match status" value="2"/>
</dbReference>
<dbReference type="InterPro" id="IPR004825">
    <property type="entry name" value="Insulin"/>
</dbReference>
<dbReference type="InterPro" id="IPR016179">
    <property type="entry name" value="Insulin-like"/>
</dbReference>
<dbReference type="InterPro" id="IPR036438">
    <property type="entry name" value="Insulin-like_sf"/>
</dbReference>
<dbReference type="InterPro" id="IPR022353">
    <property type="entry name" value="Insulin_CS"/>
</dbReference>
<dbReference type="InterPro" id="IPR022352">
    <property type="entry name" value="Insulin_family"/>
</dbReference>
<dbReference type="PANTHER" id="PTHR11454:SF9">
    <property type="entry name" value="INSULIN"/>
    <property type="match status" value="1"/>
</dbReference>
<dbReference type="PANTHER" id="PTHR11454">
    <property type="entry name" value="INSULIN/INSULIN GROWTH FACTOR"/>
    <property type="match status" value="1"/>
</dbReference>
<dbReference type="Pfam" id="PF00049">
    <property type="entry name" value="Insulin"/>
    <property type="match status" value="2"/>
</dbReference>
<dbReference type="PRINTS" id="PR00277">
    <property type="entry name" value="INSULIN"/>
</dbReference>
<dbReference type="PRINTS" id="PR00276">
    <property type="entry name" value="INSULINFAMLY"/>
</dbReference>
<dbReference type="SMART" id="SM00078">
    <property type="entry name" value="IlGF"/>
    <property type="match status" value="1"/>
</dbReference>
<dbReference type="SUPFAM" id="SSF56994">
    <property type="entry name" value="Insulin-like"/>
    <property type="match status" value="1"/>
</dbReference>
<dbReference type="PROSITE" id="PS00262">
    <property type="entry name" value="INSULIN"/>
    <property type="match status" value="1"/>
</dbReference>
<name>INS_ACIGU</name>
<protein>
    <recommendedName>
        <fullName>Insulin</fullName>
    </recommendedName>
    <component>
        <recommendedName>
            <fullName>Insulin B chain</fullName>
        </recommendedName>
    </component>
    <component>
        <recommendedName>
            <fullName>Insulin A chain</fullName>
        </recommendedName>
    </component>
</protein>
<sequence>AANQHLCGSHLVEALYLVCGERGFFYTPNKVGIVEQCCHSPCSLYDLENYCN</sequence>
<reference key="1">
    <citation type="journal article" date="1998" name="J. Pept. Res.">
        <title>Isolation and characterization of insulin in Russian sturgeon (Acipenser guldenstaedti).</title>
        <authorList>
            <person name="Rusakov Y.I."/>
            <person name="Moriyama S."/>
            <person name="Bondareva V.M."/>
            <person name="Kolychev A.P."/>
            <person name="Amemiya Y."/>
            <person name="Yasuda A."/>
            <person name="Kawauchi H."/>
        </authorList>
    </citation>
    <scope>PROTEIN SEQUENCE</scope>
    <source>
        <tissue>Pancreas</tissue>
    </source>
</reference>
<keyword id="KW-0119">Carbohydrate metabolism</keyword>
<keyword id="KW-0903">Direct protein sequencing</keyword>
<keyword id="KW-1015">Disulfide bond</keyword>
<keyword id="KW-0313">Glucose metabolism</keyword>
<keyword id="KW-0372">Hormone</keyword>
<keyword id="KW-0964">Secreted</keyword>
<accession>P81423</accession>
<feature type="peptide" id="PRO_0000015738" description="Insulin B chain">
    <location>
        <begin position="1"/>
        <end position="31"/>
    </location>
</feature>
<feature type="peptide" id="PRO_0000015739" description="Insulin A chain">
    <location>
        <begin position="32"/>
        <end position="52"/>
    </location>
</feature>
<feature type="disulfide bond" description="Interchain (between B and A chains)">
    <location>
        <begin position="7"/>
        <end position="38"/>
    </location>
</feature>
<feature type="disulfide bond" description="Interchain (between B and A chains)">
    <location>
        <begin position="19"/>
        <end position="51"/>
    </location>
</feature>
<feature type="disulfide bond">
    <location>
        <begin position="37"/>
        <end position="42"/>
    </location>
</feature>
<feature type="non-consecutive residues" evidence="1">
    <location>
        <begin position="31"/>
        <end position="32"/>
    </location>
</feature>
<gene>
    <name type="primary">ins</name>
</gene>